<gene>
    <name evidence="1" type="primary">dtd</name>
    <name type="ordered locus">PLES_54691</name>
</gene>
<evidence type="ECO:0000255" key="1">
    <source>
        <dbReference type="HAMAP-Rule" id="MF_00518"/>
    </source>
</evidence>
<keyword id="KW-0963">Cytoplasm</keyword>
<keyword id="KW-0378">Hydrolase</keyword>
<keyword id="KW-0694">RNA-binding</keyword>
<keyword id="KW-0820">tRNA-binding</keyword>
<comment type="function">
    <text evidence="1">An aminoacyl-tRNA editing enzyme that deacylates mischarged D-aminoacyl-tRNAs. Also deacylates mischarged glycyl-tRNA(Ala), protecting cells against glycine mischarging by AlaRS. Acts via tRNA-based rather than protein-based catalysis; rejects L-amino acids rather than detecting D-amino acids in the active site. By recycling D-aminoacyl-tRNA to D-amino acids and free tRNA molecules, this enzyme counteracts the toxicity associated with the formation of D-aminoacyl-tRNA entities in vivo and helps enforce protein L-homochirality.</text>
</comment>
<comment type="catalytic activity">
    <reaction evidence="1">
        <text>glycyl-tRNA(Ala) + H2O = tRNA(Ala) + glycine + H(+)</text>
        <dbReference type="Rhea" id="RHEA:53744"/>
        <dbReference type="Rhea" id="RHEA-COMP:9657"/>
        <dbReference type="Rhea" id="RHEA-COMP:13640"/>
        <dbReference type="ChEBI" id="CHEBI:15377"/>
        <dbReference type="ChEBI" id="CHEBI:15378"/>
        <dbReference type="ChEBI" id="CHEBI:57305"/>
        <dbReference type="ChEBI" id="CHEBI:78442"/>
        <dbReference type="ChEBI" id="CHEBI:78522"/>
        <dbReference type="EC" id="3.1.1.96"/>
    </reaction>
</comment>
<comment type="catalytic activity">
    <reaction evidence="1">
        <text>a D-aminoacyl-tRNA + H2O = a tRNA + a D-alpha-amino acid + H(+)</text>
        <dbReference type="Rhea" id="RHEA:13953"/>
        <dbReference type="Rhea" id="RHEA-COMP:10123"/>
        <dbReference type="Rhea" id="RHEA-COMP:10124"/>
        <dbReference type="ChEBI" id="CHEBI:15377"/>
        <dbReference type="ChEBI" id="CHEBI:15378"/>
        <dbReference type="ChEBI" id="CHEBI:59871"/>
        <dbReference type="ChEBI" id="CHEBI:78442"/>
        <dbReference type="ChEBI" id="CHEBI:79333"/>
        <dbReference type="EC" id="3.1.1.96"/>
    </reaction>
</comment>
<comment type="subunit">
    <text evidence="1">Homodimer.</text>
</comment>
<comment type="subcellular location">
    <subcellularLocation>
        <location evidence="1">Cytoplasm</location>
    </subcellularLocation>
</comment>
<comment type="domain">
    <text evidence="1">A Gly-cisPro motif from one monomer fits into the active site of the other monomer to allow specific chiral rejection of L-amino acids.</text>
</comment>
<comment type="similarity">
    <text evidence="1">Belongs to the DTD family.</text>
</comment>
<reference key="1">
    <citation type="journal article" date="2009" name="Genome Res.">
        <title>Newly introduced genomic prophage islands are critical determinants of in vivo competitiveness in the Liverpool epidemic strain of Pseudomonas aeruginosa.</title>
        <authorList>
            <person name="Winstanley C."/>
            <person name="Langille M.G.I."/>
            <person name="Fothergill J.L."/>
            <person name="Kukavica-Ibrulj I."/>
            <person name="Paradis-Bleau C."/>
            <person name="Sanschagrin F."/>
            <person name="Thomson N.R."/>
            <person name="Winsor G.L."/>
            <person name="Quail M.A."/>
            <person name="Lennard N."/>
            <person name="Bignell A."/>
            <person name="Clarke L."/>
            <person name="Seeger K."/>
            <person name="Saunders D."/>
            <person name="Harris D."/>
            <person name="Parkhill J."/>
            <person name="Hancock R.E.W."/>
            <person name="Brinkman F.S.L."/>
            <person name="Levesque R.C."/>
        </authorList>
    </citation>
    <scope>NUCLEOTIDE SEQUENCE [LARGE SCALE GENOMIC DNA]</scope>
    <source>
        <strain>LESB58</strain>
    </source>
</reference>
<protein>
    <recommendedName>
        <fullName evidence="1">D-aminoacyl-tRNA deacylase</fullName>
        <shortName evidence="1">DTD</shortName>
        <ecNumber evidence="1">3.1.1.96</ecNumber>
    </recommendedName>
    <alternativeName>
        <fullName evidence="1">Gly-tRNA(Ala) deacylase</fullName>
    </alternativeName>
</protein>
<dbReference type="EC" id="3.1.1.96" evidence="1"/>
<dbReference type="EMBL" id="FM209186">
    <property type="protein sequence ID" value="CAW30223.1"/>
    <property type="molecule type" value="Genomic_DNA"/>
</dbReference>
<dbReference type="RefSeq" id="WP_003103447.1">
    <property type="nucleotide sequence ID" value="NC_011770.1"/>
</dbReference>
<dbReference type="SMR" id="B7V3H2"/>
<dbReference type="KEGG" id="pag:PLES_54691"/>
<dbReference type="HOGENOM" id="CLU_076901_1_1_6"/>
<dbReference type="GO" id="GO:0005737">
    <property type="term" value="C:cytoplasm"/>
    <property type="evidence" value="ECO:0007669"/>
    <property type="project" value="UniProtKB-SubCell"/>
</dbReference>
<dbReference type="GO" id="GO:0051500">
    <property type="term" value="F:D-tyrosyl-tRNA(Tyr) deacylase activity"/>
    <property type="evidence" value="ECO:0007669"/>
    <property type="project" value="TreeGrafter"/>
</dbReference>
<dbReference type="GO" id="GO:0106026">
    <property type="term" value="F:Gly-tRNA(Ala) deacylase activity"/>
    <property type="evidence" value="ECO:0007669"/>
    <property type="project" value="UniProtKB-UniRule"/>
</dbReference>
<dbReference type="GO" id="GO:0043908">
    <property type="term" value="F:Ser(Gly)-tRNA(Ala) hydrolase activity"/>
    <property type="evidence" value="ECO:0007669"/>
    <property type="project" value="UniProtKB-UniRule"/>
</dbReference>
<dbReference type="GO" id="GO:0000049">
    <property type="term" value="F:tRNA binding"/>
    <property type="evidence" value="ECO:0007669"/>
    <property type="project" value="UniProtKB-UniRule"/>
</dbReference>
<dbReference type="GO" id="GO:0019478">
    <property type="term" value="P:D-amino acid catabolic process"/>
    <property type="evidence" value="ECO:0007669"/>
    <property type="project" value="UniProtKB-UniRule"/>
</dbReference>
<dbReference type="CDD" id="cd00563">
    <property type="entry name" value="Dtyr_deacylase"/>
    <property type="match status" value="1"/>
</dbReference>
<dbReference type="FunFam" id="3.50.80.10:FF:000001">
    <property type="entry name" value="D-aminoacyl-tRNA deacylase"/>
    <property type="match status" value="1"/>
</dbReference>
<dbReference type="Gene3D" id="3.50.80.10">
    <property type="entry name" value="D-tyrosyl-tRNA(Tyr) deacylase"/>
    <property type="match status" value="1"/>
</dbReference>
<dbReference type="HAMAP" id="MF_00518">
    <property type="entry name" value="Deacylase_Dtd"/>
    <property type="match status" value="1"/>
</dbReference>
<dbReference type="InterPro" id="IPR003732">
    <property type="entry name" value="Daa-tRNA_deacyls_DTD"/>
</dbReference>
<dbReference type="InterPro" id="IPR023509">
    <property type="entry name" value="DTD-like_sf"/>
</dbReference>
<dbReference type="NCBIfam" id="TIGR00256">
    <property type="entry name" value="D-aminoacyl-tRNA deacylase"/>
    <property type="match status" value="1"/>
</dbReference>
<dbReference type="PANTHER" id="PTHR10472:SF5">
    <property type="entry name" value="D-AMINOACYL-TRNA DEACYLASE 1"/>
    <property type="match status" value="1"/>
</dbReference>
<dbReference type="PANTHER" id="PTHR10472">
    <property type="entry name" value="D-TYROSYL-TRNA TYR DEACYLASE"/>
    <property type="match status" value="1"/>
</dbReference>
<dbReference type="Pfam" id="PF02580">
    <property type="entry name" value="Tyr_Deacylase"/>
    <property type="match status" value="1"/>
</dbReference>
<dbReference type="SUPFAM" id="SSF69500">
    <property type="entry name" value="DTD-like"/>
    <property type="match status" value="1"/>
</dbReference>
<sequence>MKALLQRVGAARVEVGGEIVGSIDRGLLVLVGVEPEDGERCAAKMLHKLLNYRVFGDDEGKMNRSLLDVQGGLLLVSQFTLAANTRSGLRPSFSSAAPPAQGEAVFEHLVKLAREAYPQVATGRFGADMQVHLVNDGPVTFLLES</sequence>
<organism>
    <name type="scientific">Pseudomonas aeruginosa (strain LESB58)</name>
    <dbReference type="NCBI Taxonomy" id="557722"/>
    <lineage>
        <taxon>Bacteria</taxon>
        <taxon>Pseudomonadati</taxon>
        <taxon>Pseudomonadota</taxon>
        <taxon>Gammaproteobacteria</taxon>
        <taxon>Pseudomonadales</taxon>
        <taxon>Pseudomonadaceae</taxon>
        <taxon>Pseudomonas</taxon>
    </lineage>
</organism>
<accession>B7V3H2</accession>
<proteinExistence type="inferred from homology"/>
<feature type="chain" id="PRO_1000127560" description="D-aminoacyl-tRNA deacylase">
    <location>
        <begin position="1"/>
        <end position="145"/>
    </location>
</feature>
<feature type="short sequence motif" description="Gly-cisPro motif, important for rejection of L-amino acids" evidence="1">
    <location>
        <begin position="137"/>
        <end position="138"/>
    </location>
</feature>
<name>DTD_PSEA8</name>